<evidence type="ECO:0000255" key="1">
    <source>
        <dbReference type="HAMAP-Rule" id="MF_00333"/>
    </source>
</evidence>
<protein>
    <recommendedName>
        <fullName evidence="1">Oxygen-dependent coproporphyrinogen-III oxidase</fullName>
        <shortName evidence="1">CPO</shortName>
        <shortName evidence="1">Coprogen oxidase</shortName>
        <shortName evidence="1">Coproporphyrinogenase</shortName>
        <ecNumber evidence="1">1.3.3.3</ecNumber>
    </recommendedName>
</protein>
<gene>
    <name evidence="1" type="primary">hemF</name>
    <name type="ordered locus">Sputw3181_0030</name>
</gene>
<comment type="function">
    <text evidence="1">Involved in the heme biosynthesis. Catalyzes the aerobic oxidative decarboxylation of propionate groups of rings A and B of coproporphyrinogen-III to yield the vinyl groups in protoporphyrinogen-IX.</text>
</comment>
<comment type="catalytic activity">
    <reaction evidence="1">
        <text>coproporphyrinogen III + O2 + 2 H(+) = protoporphyrinogen IX + 2 CO2 + 2 H2O</text>
        <dbReference type="Rhea" id="RHEA:18257"/>
        <dbReference type="ChEBI" id="CHEBI:15377"/>
        <dbReference type="ChEBI" id="CHEBI:15378"/>
        <dbReference type="ChEBI" id="CHEBI:15379"/>
        <dbReference type="ChEBI" id="CHEBI:16526"/>
        <dbReference type="ChEBI" id="CHEBI:57307"/>
        <dbReference type="ChEBI" id="CHEBI:57309"/>
        <dbReference type="EC" id="1.3.3.3"/>
    </reaction>
</comment>
<comment type="cofactor">
    <cofactor evidence="1">
        <name>a divalent metal cation</name>
        <dbReference type="ChEBI" id="CHEBI:60240"/>
    </cofactor>
</comment>
<comment type="pathway">
    <text evidence="1">Porphyrin-containing compound metabolism; protoporphyrin-IX biosynthesis; protoporphyrinogen-IX from coproporphyrinogen-III (O2 route): step 1/1.</text>
</comment>
<comment type="subunit">
    <text evidence="1">Homodimer.</text>
</comment>
<comment type="subcellular location">
    <subcellularLocation>
        <location evidence="1">Cytoplasm</location>
    </subcellularLocation>
</comment>
<comment type="similarity">
    <text evidence="1">Belongs to the aerobic coproporphyrinogen-III oxidase family.</text>
</comment>
<proteinExistence type="inferred from homology"/>
<keyword id="KW-0963">Cytoplasm</keyword>
<keyword id="KW-0350">Heme biosynthesis</keyword>
<keyword id="KW-0479">Metal-binding</keyword>
<keyword id="KW-0560">Oxidoreductase</keyword>
<keyword id="KW-0627">Porphyrin biosynthesis</keyword>
<dbReference type="EC" id="1.3.3.3" evidence="1"/>
<dbReference type="EMBL" id="CP000503">
    <property type="protein sequence ID" value="ABM22883.1"/>
    <property type="molecule type" value="Genomic_DNA"/>
</dbReference>
<dbReference type="RefSeq" id="WP_011787451.1">
    <property type="nucleotide sequence ID" value="NC_008750.1"/>
</dbReference>
<dbReference type="SMR" id="A1RDY8"/>
<dbReference type="GeneID" id="67441622"/>
<dbReference type="KEGG" id="shw:Sputw3181_0030"/>
<dbReference type="HOGENOM" id="CLU_026169_0_1_6"/>
<dbReference type="UniPathway" id="UPA00251">
    <property type="reaction ID" value="UER00322"/>
</dbReference>
<dbReference type="Proteomes" id="UP000002597">
    <property type="component" value="Chromosome"/>
</dbReference>
<dbReference type="GO" id="GO:0005737">
    <property type="term" value="C:cytoplasm"/>
    <property type="evidence" value="ECO:0007669"/>
    <property type="project" value="UniProtKB-SubCell"/>
</dbReference>
<dbReference type="GO" id="GO:0004109">
    <property type="term" value="F:coproporphyrinogen oxidase activity"/>
    <property type="evidence" value="ECO:0007669"/>
    <property type="project" value="UniProtKB-UniRule"/>
</dbReference>
<dbReference type="GO" id="GO:0046872">
    <property type="term" value="F:metal ion binding"/>
    <property type="evidence" value="ECO:0007669"/>
    <property type="project" value="UniProtKB-KW"/>
</dbReference>
<dbReference type="GO" id="GO:0042803">
    <property type="term" value="F:protein homodimerization activity"/>
    <property type="evidence" value="ECO:0000250"/>
    <property type="project" value="UniProtKB"/>
</dbReference>
<dbReference type="GO" id="GO:0006782">
    <property type="term" value="P:protoporphyrinogen IX biosynthetic process"/>
    <property type="evidence" value="ECO:0007669"/>
    <property type="project" value="UniProtKB-UniRule"/>
</dbReference>
<dbReference type="FunFam" id="3.40.1500.10:FF:000001">
    <property type="entry name" value="Oxygen-dependent coproporphyrinogen-III oxidase"/>
    <property type="match status" value="1"/>
</dbReference>
<dbReference type="Gene3D" id="3.40.1500.10">
    <property type="entry name" value="Coproporphyrinogen III oxidase, aerobic"/>
    <property type="match status" value="1"/>
</dbReference>
<dbReference type="HAMAP" id="MF_00333">
    <property type="entry name" value="Coprogen_oxidas"/>
    <property type="match status" value="1"/>
</dbReference>
<dbReference type="InterPro" id="IPR001260">
    <property type="entry name" value="Coprogen_oxidase_aer"/>
</dbReference>
<dbReference type="InterPro" id="IPR036406">
    <property type="entry name" value="Coprogen_oxidase_aer_sf"/>
</dbReference>
<dbReference type="InterPro" id="IPR018375">
    <property type="entry name" value="Coprogen_oxidase_CS"/>
</dbReference>
<dbReference type="NCBIfam" id="NF003727">
    <property type="entry name" value="PRK05330.1"/>
    <property type="match status" value="1"/>
</dbReference>
<dbReference type="PANTHER" id="PTHR10755">
    <property type="entry name" value="COPROPORPHYRINOGEN III OXIDASE, MITOCHONDRIAL"/>
    <property type="match status" value="1"/>
</dbReference>
<dbReference type="PANTHER" id="PTHR10755:SF0">
    <property type="entry name" value="OXYGEN-DEPENDENT COPROPORPHYRINOGEN-III OXIDASE, MITOCHONDRIAL"/>
    <property type="match status" value="1"/>
</dbReference>
<dbReference type="Pfam" id="PF01218">
    <property type="entry name" value="Coprogen_oxidas"/>
    <property type="match status" value="1"/>
</dbReference>
<dbReference type="PIRSF" id="PIRSF000166">
    <property type="entry name" value="Coproporphyri_ox"/>
    <property type="match status" value="1"/>
</dbReference>
<dbReference type="PRINTS" id="PR00073">
    <property type="entry name" value="COPRGNOXDASE"/>
</dbReference>
<dbReference type="SUPFAM" id="SSF102886">
    <property type="entry name" value="Coproporphyrinogen III oxidase"/>
    <property type="match status" value="1"/>
</dbReference>
<dbReference type="PROSITE" id="PS01021">
    <property type="entry name" value="COPROGEN_OXIDASE"/>
    <property type="match status" value="1"/>
</dbReference>
<organism>
    <name type="scientific">Shewanella sp. (strain W3-18-1)</name>
    <dbReference type="NCBI Taxonomy" id="351745"/>
    <lineage>
        <taxon>Bacteria</taxon>
        <taxon>Pseudomonadati</taxon>
        <taxon>Pseudomonadota</taxon>
        <taxon>Gammaproteobacteria</taxon>
        <taxon>Alteromonadales</taxon>
        <taxon>Shewanellaceae</taxon>
        <taxon>Shewanella</taxon>
    </lineage>
</organism>
<sequence length="302" mass="34085">MSVPDVAVVKAFLIDLQNRICAGLQALDGQATFAADSWTRAEGGGGTSRVLTQGAVFEQAGVNFSHVTGAAMPASATAHRPELAGRSFEAMGVSLVIHPNNPYIPTTHANVRFFIAQKEGADPVWWFGGGFDLTPYYPFEEDVREWHQTSKDICAPFGDEVYPKYKKWCDEYFFLPHRNETRGVGGLFFDDLNQDGFEQSFSFMQAVGNGFLTAYAPIVERRKETEFGERERQFQLYRRGRYVEFNLVYDRGTLFGLQTGGRTESILMSMPPLVRWQYAYTPEAGSPEADLYDNYLKPRDWV</sequence>
<feature type="chain" id="PRO_1000019504" description="Oxygen-dependent coproporphyrinogen-III oxidase">
    <location>
        <begin position="1"/>
        <end position="302"/>
    </location>
</feature>
<feature type="region of interest" description="Important for dimerization" evidence="1">
    <location>
        <begin position="242"/>
        <end position="277"/>
    </location>
</feature>
<feature type="active site" description="Proton donor" evidence="1">
    <location>
        <position position="108"/>
    </location>
</feature>
<feature type="binding site" evidence="1">
    <location>
        <position position="94"/>
    </location>
    <ligand>
        <name>substrate</name>
    </ligand>
</feature>
<feature type="binding site" evidence="1">
    <location>
        <position position="98"/>
    </location>
    <ligand>
        <name>a divalent metal cation</name>
        <dbReference type="ChEBI" id="CHEBI:60240"/>
    </ligand>
</feature>
<feature type="binding site" evidence="1">
    <location>
        <position position="108"/>
    </location>
    <ligand>
        <name>a divalent metal cation</name>
        <dbReference type="ChEBI" id="CHEBI:60240"/>
    </ligand>
</feature>
<feature type="binding site" evidence="1">
    <location>
        <begin position="110"/>
        <end position="112"/>
    </location>
    <ligand>
        <name>substrate</name>
    </ligand>
</feature>
<feature type="binding site" evidence="1">
    <location>
        <position position="147"/>
    </location>
    <ligand>
        <name>a divalent metal cation</name>
        <dbReference type="ChEBI" id="CHEBI:60240"/>
    </ligand>
</feature>
<feature type="binding site" evidence="1">
    <location>
        <position position="177"/>
    </location>
    <ligand>
        <name>a divalent metal cation</name>
        <dbReference type="ChEBI" id="CHEBI:60240"/>
    </ligand>
</feature>
<feature type="binding site" evidence="1">
    <location>
        <begin position="260"/>
        <end position="262"/>
    </location>
    <ligand>
        <name>substrate</name>
    </ligand>
</feature>
<feature type="site" description="Important for dimerization" evidence="1">
    <location>
        <position position="177"/>
    </location>
</feature>
<reference key="1">
    <citation type="submission" date="2006-12" db="EMBL/GenBank/DDBJ databases">
        <title>Complete sequence of Shewanella sp. W3-18-1.</title>
        <authorList>
            <consortium name="US DOE Joint Genome Institute"/>
            <person name="Copeland A."/>
            <person name="Lucas S."/>
            <person name="Lapidus A."/>
            <person name="Barry K."/>
            <person name="Detter J.C."/>
            <person name="Glavina del Rio T."/>
            <person name="Hammon N."/>
            <person name="Israni S."/>
            <person name="Dalin E."/>
            <person name="Tice H."/>
            <person name="Pitluck S."/>
            <person name="Chain P."/>
            <person name="Malfatti S."/>
            <person name="Shin M."/>
            <person name="Vergez L."/>
            <person name="Schmutz J."/>
            <person name="Larimer F."/>
            <person name="Land M."/>
            <person name="Hauser L."/>
            <person name="Kyrpides N."/>
            <person name="Lykidis A."/>
            <person name="Tiedje J."/>
            <person name="Richardson P."/>
        </authorList>
    </citation>
    <scope>NUCLEOTIDE SEQUENCE [LARGE SCALE GENOMIC DNA]</scope>
    <source>
        <strain>W3-18-1</strain>
    </source>
</reference>
<name>HEM6_SHESW</name>
<accession>A1RDY8</accession>